<comment type="function">
    <text evidence="1">Converts 2C-methyl-D-erythritol 2,4-cyclodiphosphate (ME-2,4cPP) into 1-hydroxy-2-methyl-2-(E)-butenyl 4-diphosphate.</text>
</comment>
<comment type="catalytic activity">
    <reaction evidence="1">
        <text>(2E)-4-hydroxy-3-methylbut-2-enyl diphosphate + oxidized [flavodoxin] + H2O + 2 H(+) = 2-C-methyl-D-erythritol 2,4-cyclic diphosphate + reduced [flavodoxin]</text>
        <dbReference type="Rhea" id="RHEA:43604"/>
        <dbReference type="Rhea" id="RHEA-COMP:10622"/>
        <dbReference type="Rhea" id="RHEA-COMP:10623"/>
        <dbReference type="ChEBI" id="CHEBI:15377"/>
        <dbReference type="ChEBI" id="CHEBI:15378"/>
        <dbReference type="ChEBI" id="CHEBI:57618"/>
        <dbReference type="ChEBI" id="CHEBI:58210"/>
        <dbReference type="ChEBI" id="CHEBI:58483"/>
        <dbReference type="ChEBI" id="CHEBI:128753"/>
        <dbReference type="EC" id="1.17.7.3"/>
    </reaction>
</comment>
<comment type="cofactor">
    <cofactor evidence="1">
        <name>[4Fe-4S] cluster</name>
        <dbReference type="ChEBI" id="CHEBI:49883"/>
    </cofactor>
    <text evidence="1">Binds 1 [4Fe-4S] cluster.</text>
</comment>
<comment type="pathway">
    <text evidence="1">Isoprenoid biosynthesis; isopentenyl diphosphate biosynthesis via DXP pathway; isopentenyl diphosphate from 1-deoxy-D-xylulose 5-phosphate: step 5/6.</text>
</comment>
<comment type="similarity">
    <text evidence="1">Belongs to the IspG family.</text>
</comment>
<comment type="sequence caution" evidence="2">
    <conflict type="erroneous initiation">
        <sequence resource="EMBL-CDS" id="ABN03067"/>
    </conflict>
    <text>Extended N-terminus.</text>
</comment>
<name>ISPG_BURM9</name>
<dbReference type="EC" id="1.17.7.3" evidence="1"/>
<dbReference type="EMBL" id="CP000546">
    <property type="protein sequence ID" value="ABN03067.2"/>
    <property type="status" value="ALT_INIT"/>
    <property type="molecule type" value="Genomic_DNA"/>
</dbReference>
<dbReference type="SMR" id="A2S2A2"/>
<dbReference type="KEGG" id="bml:BMA10229_A0062"/>
<dbReference type="HOGENOM" id="CLU_042258_1_0_4"/>
<dbReference type="UniPathway" id="UPA00056">
    <property type="reaction ID" value="UER00096"/>
</dbReference>
<dbReference type="Proteomes" id="UP000002283">
    <property type="component" value="Chromosome I"/>
</dbReference>
<dbReference type="GO" id="GO:0051539">
    <property type="term" value="F:4 iron, 4 sulfur cluster binding"/>
    <property type="evidence" value="ECO:0007669"/>
    <property type="project" value="UniProtKB-UniRule"/>
</dbReference>
<dbReference type="GO" id="GO:0046429">
    <property type="term" value="F:4-hydroxy-3-methylbut-2-en-1-yl diphosphate synthase activity (ferredoxin)"/>
    <property type="evidence" value="ECO:0007669"/>
    <property type="project" value="UniProtKB-UniRule"/>
</dbReference>
<dbReference type="GO" id="GO:0141197">
    <property type="term" value="F:4-hydroxy-3-methylbut-2-enyl-diphosphate synthase activity (flavodoxin)"/>
    <property type="evidence" value="ECO:0007669"/>
    <property type="project" value="UniProtKB-EC"/>
</dbReference>
<dbReference type="GO" id="GO:0005506">
    <property type="term" value="F:iron ion binding"/>
    <property type="evidence" value="ECO:0007669"/>
    <property type="project" value="InterPro"/>
</dbReference>
<dbReference type="GO" id="GO:0019288">
    <property type="term" value="P:isopentenyl diphosphate biosynthetic process, methylerythritol 4-phosphate pathway"/>
    <property type="evidence" value="ECO:0007669"/>
    <property type="project" value="UniProtKB-UniRule"/>
</dbReference>
<dbReference type="GO" id="GO:0016114">
    <property type="term" value="P:terpenoid biosynthetic process"/>
    <property type="evidence" value="ECO:0007669"/>
    <property type="project" value="InterPro"/>
</dbReference>
<dbReference type="FunFam" id="3.30.413.10:FF:000012">
    <property type="entry name" value="4-hydroxy-3-methylbut-2-en-1-yl diphosphate synthase (flavodoxin)"/>
    <property type="match status" value="1"/>
</dbReference>
<dbReference type="Gene3D" id="3.20.20.20">
    <property type="entry name" value="Dihydropteroate synthase-like"/>
    <property type="match status" value="1"/>
</dbReference>
<dbReference type="Gene3D" id="3.30.413.10">
    <property type="entry name" value="Sulfite Reductase Hemoprotein, domain 1"/>
    <property type="match status" value="1"/>
</dbReference>
<dbReference type="HAMAP" id="MF_00159">
    <property type="entry name" value="IspG"/>
    <property type="match status" value="1"/>
</dbReference>
<dbReference type="InterPro" id="IPR011005">
    <property type="entry name" value="Dihydropteroate_synth-like_sf"/>
</dbReference>
<dbReference type="InterPro" id="IPR016425">
    <property type="entry name" value="IspG_bac"/>
</dbReference>
<dbReference type="InterPro" id="IPR004588">
    <property type="entry name" value="IspG_bac-typ"/>
</dbReference>
<dbReference type="InterPro" id="IPR045854">
    <property type="entry name" value="NO2/SO3_Rdtase_4Fe4S_sf"/>
</dbReference>
<dbReference type="NCBIfam" id="TIGR00612">
    <property type="entry name" value="ispG_gcpE"/>
    <property type="match status" value="1"/>
</dbReference>
<dbReference type="NCBIfam" id="NF001540">
    <property type="entry name" value="PRK00366.1"/>
    <property type="match status" value="1"/>
</dbReference>
<dbReference type="PANTHER" id="PTHR30454">
    <property type="entry name" value="4-HYDROXY-3-METHYLBUT-2-EN-1-YL DIPHOSPHATE SYNTHASE"/>
    <property type="match status" value="1"/>
</dbReference>
<dbReference type="PANTHER" id="PTHR30454:SF0">
    <property type="entry name" value="4-HYDROXY-3-METHYLBUT-2-EN-1-YL DIPHOSPHATE SYNTHASE (FERREDOXIN), CHLOROPLASTIC"/>
    <property type="match status" value="1"/>
</dbReference>
<dbReference type="Pfam" id="PF04551">
    <property type="entry name" value="GcpE"/>
    <property type="match status" value="1"/>
</dbReference>
<dbReference type="PIRSF" id="PIRSF004640">
    <property type="entry name" value="IspG"/>
    <property type="match status" value="1"/>
</dbReference>
<dbReference type="SUPFAM" id="SSF56014">
    <property type="entry name" value="Nitrite and sulphite reductase 4Fe-4S domain-like"/>
    <property type="match status" value="1"/>
</dbReference>
<proteinExistence type="inferred from homology"/>
<protein>
    <recommendedName>
        <fullName evidence="1">4-hydroxy-3-methylbut-2-en-1-yl diphosphate synthase (flavodoxin)</fullName>
        <ecNumber evidence="1">1.17.7.3</ecNumber>
    </recommendedName>
    <alternativeName>
        <fullName evidence="1">1-hydroxy-2-methyl-2-(E)-butenyl 4-diphosphate synthase</fullName>
    </alternativeName>
</protein>
<accession>A2S2A2</accession>
<feature type="chain" id="PRO_1000011447" description="4-hydroxy-3-methylbut-2-en-1-yl diphosphate synthase (flavodoxin)">
    <location>
        <begin position="1"/>
        <end position="416"/>
    </location>
</feature>
<feature type="binding site" evidence="1">
    <location>
        <position position="304"/>
    </location>
    <ligand>
        <name>[4Fe-4S] cluster</name>
        <dbReference type="ChEBI" id="CHEBI:49883"/>
    </ligand>
</feature>
<feature type="binding site" evidence="1">
    <location>
        <position position="307"/>
    </location>
    <ligand>
        <name>[4Fe-4S] cluster</name>
        <dbReference type="ChEBI" id="CHEBI:49883"/>
    </ligand>
</feature>
<feature type="binding site" evidence="1">
    <location>
        <position position="350"/>
    </location>
    <ligand>
        <name>[4Fe-4S] cluster</name>
        <dbReference type="ChEBI" id="CHEBI:49883"/>
    </ligand>
</feature>
<feature type="binding site" evidence="1">
    <location>
        <position position="357"/>
    </location>
    <ligand>
        <name>[4Fe-4S] cluster</name>
        <dbReference type="ChEBI" id="CHEBI:49883"/>
    </ligand>
</feature>
<gene>
    <name evidence="1" type="primary">ispG</name>
    <name type="ordered locus">BMA10229_A0062</name>
</gene>
<reference key="1">
    <citation type="journal article" date="2010" name="Genome Biol. Evol.">
        <title>Continuing evolution of Burkholderia mallei through genome reduction and large-scale rearrangements.</title>
        <authorList>
            <person name="Losada L."/>
            <person name="Ronning C.M."/>
            <person name="DeShazer D."/>
            <person name="Woods D."/>
            <person name="Fedorova N."/>
            <person name="Kim H.S."/>
            <person name="Shabalina S.A."/>
            <person name="Pearson T.R."/>
            <person name="Brinkac L."/>
            <person name="Tan P."/>
            <person name="Nandi T."/>
            <person name="Crabtree J."/>
            <person name="Badger J."/>
            <person name="Beckstrom-Sternberg S."/>
            <person name="Saqib M."/>
            <person name="Schutzer S.E."/>
            <person name="Keim P."/>
            <person name="Nierman W.C."/>
        </authorList>
    </citation>
    <scope>NUCLEOTIDE SEQUENCE [LARGE SCALE GENOMIC DNA]</scope>
    <source>
        <strain>NCTC 10229</strain>
    </source>
</reference>
<organism>
    <name type="scientific">Burkholderia mallei (strain NCTC 10229)</name>
    <dbReference type="NCBI Taxonomy" id="412022"/>
    <lineage>
        <taxon>Bacteria</taxon>
        <taxon>Pseudomonadati</taxon>
        <taxon>Pseudomonadota</taxon>
        <taxon>Betaproteobacteria</taxon>
        <taxon>Burkholderiales</taxon>
        <taxon>Burkholderiaceae</taxon>
        <taxon>Burkholderia</taxon>
        <taxon>pseudomallei group</taxon>
    </lineage>
</organism>
<keyword id="KW-0004">4Fe-4S</keyword>
<keyword id="KW-0408">Iron</keyword>
<keyword id="KW-0411">Iron-sulfur</keyword>
<keyword id="KW-0414">Isoprene biosynthesis</keyword>
<keyword id="KW-0479">Metal-binding</keyword>
<keyword id="KW-0560">Oxidoreductase</keyword>
<sequence>MFGGHAPRRVSHAVDVRWGGTLVTIGGAAPVRVQSMTNTDTADAIGTAIQVKELANAGSELVRITVNTPEAAAAVPAIREQLDRMGVTVPLVGDFHYNGHLLLRDYPDCAQALSKYRINPGNVGQGAKRDSQFAQMIEAAIKYDKPVRIGVNWGSLDQDLLARMMDENGARAEPWEAQSVMYEALIQSAIGSAERAVELGLGRDKIVLSCKVSGVQDLVAVYRELSRRCGFALHLGLTEAGMGSKGIVASTAAIGLLLQEGIGDTIRISLTPEPGAPRTGEVVVGQEILQTMGLRSFAPMVVACPGCGRTTSTLFQELALRIQTYLREQMPVWRSEYPGVEKMNVAVMGCIVNGPGESKHANIGISLPGSGENPAAPVFVDGEKVKTLRGEHIAEEFQQIVSDYVARTYGRAAAQN</sequence>
<evidence type="ECO:0000255" key="1">
    <source>
        <dbReference type="HAMAP-Rule" id="MF_00159"/>
    </source>
</evidence>
<evidence type="ECO:0000305" key="2"/>